<evidence type="ECO:0000250" key="1"/>
<evidence type="ECO:0000305" key="2"/>
<gene>
    <name type="primary">cpkA</name>
    <name type="ordered locus">TK2158</name>
</gene>
<dbReference type="EC" id="2.7.2.2"/>
<dbReference type="EMBL" id="AP006878">
    <property type="protein sequence ID" value="BAD86347.1"/>
    <property type="molecule type" value="Genomic_DNA"/>
</dbReference>
<dbReference type="RefSeq" id="WP_011251108.1">
    <property type="nucleotide sequence ID" value="NC_006624.1"/>
</dbReference>
<dbReference type="SMR" id="Q5JHG5"/>
<dbReference type="STRING" id="69014.TK2158"/>
<dbReference type="EnsemblBacteria" id="BAD86347">
    <property type="protein sequence ID" value="BAD86347"/>
    <property type="gene ID" value="TK2158"/>
</dbReference>
<dbReference type="GeneID" id="78448696"/>
<dbReference type="KEGG" id="tko:TK2158"/>
<dbReference type="PATRIC" id="fig|69014.16.peg.2113"/>
<dbReference type="eggNOG" id="arCOG00863">
    <property type="taxonomic scope" value="Archaea"/>
</dbReference>
<dbReference type="HOGENOM" id="CLU_076278_0_0_2"/>
<dbReference type="InParanoid" id="Q5JHG5"/>
<dbReference type="OrthoDB" id="31128at2157"/>
<dbReference type="PhylomeDB" id="Q5JHG5"/>
<dbReference type="Proteomes" id="UP000000536">
    <property type="component" value="Chromosome"/>
</dbReference>
<dbReference type="GO" id="GO:0005829">
    <property type="term" value="C:cytosol"/>
    <property type="evidence" value="ECO:0000318"/>
    <property type="project" value="GO_Central"/>
</dbReference>
<dbReference type="GO" id="GO:0005524">
    <property type="term" value="F:ATP binding"/>
    <property type="evidence" value="ECO:0007669"/>
    <property type="project" value="UniProtKB-KW"/>
</dbReference>
<dbReference type="GO" id="GO:0008804">
    <property type="term" value="F:carbamate kinase activity"/>
    <property type="evidence" value="ECO:0000318"/>
    <property type="project" value="GO_Central"/>
</dbReference>
<dbReference type="GO" id="GO:0019546">
    <property type="term" value="P:arginine deiminase pathway"/>
    <property type="evidence" value="ECO:0000318"/>
    <property type="project" value="GO_Central"/>
</dbReference>
<dbReference type="CDD" id="cd04235">
    <property type="entry name" value="AAK_CK"/>
    <property type="match status" value="1"/>
</dbReference>
<dbReference type="FunFam" id="3.40.1160.10:FF:000007">
    <property type="entry name" value="Carbamate kinase"/>
    <property type="match status" value="1"/>
</dbReference>
<dbReference type="Gene3D" id="3.40.1160.10">
    <property type="entry name" value="Acetylglutamate kinase-like"/>
    <property type="match status" value="1"/>
</dbReference>
<dbReference type="InterPro" id="IPR036393">
    <property type="entry name" value="AceGlu_kinase-like_sf"/>
</dbReference>
<dbReference type="InterPro" id="IPR001048">
    <property type="entry name" value="Asp/Glu/Uridylate_kinase"/>
</dbReference>
<dbReference type="InterPro" id="IPR003964">
    <property type="entry name" value="Carb_kinase"/>
</dbReference>
<dbReference type="NCBIfam" id="TIGR00746">
    <property type="entry name" value="arcC"/>
    <property type="match status" value="1"/>
</dbReference>
<dbReference type="NCBIfam" id="NF009007">
    <property type="entry name" value="PRK12352.1"/>
    <property type="match status" value="1"/>
</dbReference>
<dbReference type="NCBIfam" id="NF009008">
    <property type="entry name" value="PRK12354.1"/>
    <property type="match status" value="1"/>
</dbReference>
<dbReference type="PANTHER" id="PTHR30409">
    <property type="entry name" value="CARBAMATE KINASE"/>
    <property type="match status" value="1"/>
</dbReference>
<dbReference type="PANTHER" id="PTHR30409:SF1">
    <property type="entry name" value="CARBAMATE KINASE-RELATED"/>
    <property type="match status" value="1"/>
</dbReference>
<dbReference type="Pfam" id="PF00696">
    <property type="entry name" value="AA_kinase"/>
    <property type="match status" value="1"/>
</dbReference>
<dbReference type="PIRSF" id="PIRSF000723">
    <property type="entry name" value="Carbamate_kin"/>
    <property type="match status" value="1"/>
</dbReference>
<dbReference type="PRINTS" id="PR01469">
    <property type="entry name" value="CARBMTKINASE"/>
</dbReference>
<dbReference type="SUPFAM" id="SSF53633">
    <property type="entry name" value="Carbamate kinase-like"/>
    <property type="match status" value="1"/>
</dbReference>
<name>CPKA_THEKO</name>
<protein>
    <recommendedName>
        <fullName>Carbamate kinase</fullName>
        <ecNumber>2.7.2.2</ecNumber>
    </recommendedName>
    <alternativeName>
        <fullName>Carbamate kinase-like carbamoylphosphate synthase</fullName>
    </alternativeName>
</protein>
<reference key="1">
    <citation type="journal article" date="2005" name="Genome Res.">
        <title>Complete genome sequence of the hyperthermophilic archaeon Thermococcus kodakaraensis KOD1 and comparison with Pyrococcus genomes.</title>
        <authorList>
            <person name="Fukui T."/>
            <person name="Atomi H."/>
            <person name="Kanai T."/>
            <person name="Matsumi R."/>
            <person name="Fujiwara S."/>
            <person name="Imanaka T."/>
        </authorList>
    </citation>
    <scope>NUCLEOTIDE SEQUENCE [LARGE SCALE GENOMIC DNA]</scope>
    <source>
        <strain>ATCC BAA-918 / JCM 12380 / KOD1</strain>
    </source>
</reference>
<comment type="catalytic activity">
    <reaction>
        <text>hydrogencarbonate + NH4(+) + ATP = carbamoyl phosphate + ADP + H2O + H(+)</text>
        <dbReference type="Rhea" id="RHEA:10152"/>
        <dbReference type="ChEBI" id="CHEBI:15377"/>
        <dbReference type="ChEBI" id="CHEBI:15378"/>
        <dbReference type="ChEBI" id="CHEBI:17544"/>
        <dbReference type="ChEBI" id="CHEBI:28938"/>
        <dbReference type="ChEBI" id="CHEBI:30616"/>
        <dbReference type="ChEBI" id="CHEBI:58228"/>
        <dbReference type="ChEBI" id="CHEBI:456216"/>
        <dbReference type="EC" id="2.7.2.2"/>
    </reaction>
</comment>
<comment type="subunit">
    <text evidence="1">Homodimer.</text>
</comment>
<comment type="subcellular location">
    <subcellularLocation>
        <location evidence="1">Cytoplasm</location>
    </subcellularLocation>
</comment>
<comment type="similarity">
    <text evidence="2">Belongs to the carbamate kinase family.</text>
</comment>
<organism>
    <name type="scientific">Thermococcus kodakarensis (strain ATCC BAA-918 / JCM 12380 / KOD1)</name>
    <name type="common">Pyrococcus kodakaraensis (strain KOD1)</name>
    <dbReference type="NCBI Taxonomy" id="69014"/>
    <lineage>
        <taxon>Archaea</taxon>
        <taxon>Methanobacteriati</taxon>
        <taxon>Methanobacteriota</taxon>
        <taxon>Thermococci</taxon>
        <taxon>Thermococcales</taxon>
        <taxon>Thermococcaceae</taxon>
        <taxon>Thermococcus</taxon>
    </lineage>
</organism>
<proteinExistence type="inferred from homology"/>
<accession>Q5JHG5</accession>
<feature type="chain" id="PRO_0000185151" description="Carbamate kinase">
    <location>
        <begin position="1"/>
        <end position="315"/>
    </location>
</feature>
<sequence length="315" mass="34105">MKRVVIALGGNAILQRGQKGTYEEQMENVRRTAKQIADIILDGDYEVVITHGNGPQVGALLLHMDAGQQVYGIPAQPMDVAGAMTQGQIGYMIGQALINELRKRGVEKPVATIVTQTIVDKNDPAFQNPSKPVGPFYDEETAKKLAKEKGWTVIEDAGRGWRRVVPSPDPKGHVEAPVIVDLVEKGFIVIASGGGGVPVIEENGELKGVEAVIDKDLAGEKLAEEVKADIFMILTDVNGAAINYGKPDEKWLGKVTVDELKRYYKEGHFKKGSMGPKVLAAIRFVEWGGERAVIASLDRAVEALEGKTGTQVVRE</sequence>
<keyword id="KW-0067">ATP-binding</keyword>
<keyword id="KW-0963">Cytoplasm</keyword>
<keyword id="KW-0418">Kinase</keyword>
<keyword id="KW-0547">Nucleotide-binding</keyword>
<keyword id="KW-1185">Reference proteome</keyword>
<keyword id="KW-0808">Transferase</keyword>